<reference key="1">
    <citation type="journal article" date="2007" name="Proc. Natl. Acad. Sci. U.S.A.">
        <title>Genome plasticity of BCG and impact on vaccine efficacy.</title>
        <authorList>
            <person name="Brosch R."/>
            <person name="Gordon S.V."/>
            <person name="Garnier T."/>
            <person name="Eiglmeier K."/>
            <person name="Frigui W."/>
            <person name="Valenti P."/>
            <person name="Dos Santos S."/>
            <person name="Duthoy S."/>
            <person name="Lacroix C."/>
            <person name="Garcia-Pelayo C."/>
            <person name="Inwald J.K."/>
            <person name="Golby P."/>
            <person name="Garcia J.N."/>
            <person name="Hewinson R.G."/>
            <person name="Behr M.A."/>
            <person name="Quail M.A."/>
            <person name="Churcher C."/>
            <person name="Barrell B.G."/>
            <person name="Parkhill J."/>
            <person name="Cole S.T."/>
        </authorList>
    </citation>
    <scope>NUCLEOTIDE SEQUENCE [LARGE SCALE GENOMIC DNA]</scope>
    <source>
        <strain>BCG / Pasteur 1173P2</strain>
    </source>
</reference>
<reference key="2">
    <citation type="journal article" date="2013" name="BMC Microbiol.">
        <title>Lipoproteins of slow-growing Mycobacteria carry three fatty acids and are N-acylated by apolipoprotein N-acyltransferase BCG_2070c.</title>
        <authorList>
            <person name="Bruelle J.K."/>
            <person name="Tschumi A."/>
            <person name="Sander P."/>
        </authorList>
    </citation>
    <scope>FUNCTION AS AN N-ACYLTRANSFERASE</scope>
    <scope>DISRUPTION PHENOTYPE</scope>
    <source>
        <strain>BCG / Pasteur 1173P2</strain>
    </source>
</reference>
<sequence>MKLGAWVAAQLPTTRTAVRTRLTRLVVSIVAGLLLYASFPPRNCWWAAVVALALLAWVLTHRATTPVGGLGYGLLFGLVFYVSLLPWIGELVGPGPWLALATTCALFPGIFGLFAVVVRLLPGWPIWFAVGWAAQEWLKSILPFGGFPWGSVAFGQAEGPLLPLVQLGGVALLSTGVALVGCGLTAIALEIEKWWRTGGQGDAPPAVVLPAACICLVLFAAIVVWPQVRHAGSGSGGEPTVTVAVVQGNVPRLGLDFNAQRRAVLDNHVEETLRLAADVHAGLAQQPQFVIWPENSSDIDPFVNPDAGQRISAAAEAIGAPILIGTLMDVPGRPRENPEWTNTAIVWNPGTGPADRHDKAIVQPFGEYLPMPWLFRHLSGYADRAGHFVPGNGTGVVRIAGVPVGVATCWEVIFDRAPRKSILGGAQLLTVPSNNATFNKTMSEQQLAFAKVRAVEHDRYVVVAGTTGISAVIAPDGGELIRTDFFQPAYLDSQVRLKTRLTPATRWGPILQWILVGAAAAVVLVAMRQNGWFPRPRRSEPKGENDDSDAPPGRSEASGPPALSESDDELIQPEQGGRHSSGFGRHRATSRSYMTTGQPAPPAPGNRPSQRVLVIIPTFNERENLPVIHRRLTQACPAVHVLVVDDSSPDGTGQLADELAQADPGRTHVMHRTAKNGLGAAYLAGFAWGLSREYSVLVEMDADGSHAPEQLQRLLDAVDAGADLAIGSRYVAGGTVRNWPWRRLVLSKTANTYSRLALGIGIHDITAGYRAYRREALEAIDLDGVDSKGYCFQIDLTWRTVSNGFVVTEVPITFTERELGVSKMSGSNIREALVKVARWGIEGRLSRSDHARARPDIARPGAGGSRVSRADVTE</sequence>
<evidence type="ECO:0000250" key="1">
    <source>
        <dbReference type="UniProtKB" id="A0QZ13"/>
    </source>
</evidence>
<evidence type="ECO:0000250" key="2">
    <source>
        <dbReference type="UniProtKB" id="O53493"/>
    </source>
</evidence>
<evidence type="ECO:0000250" key="3">
    <source>
        <dbReference type="UniProtKB" id="P23930"/>
    </source>
</evidence>
<evidence type="ECO:0000255" key="4"/>
<evidence type="ECO:0000255" key="5">
    <source>
        <dbReference type="PROSITE-ProRule" id="PRU00054"/>
    </source>
</evidence>
<evidence type="ECO:0000256" key="6">
    <source>
        <dbReference type="SAM" id="MobiDB-lite"/>
    </source>
</evidence>
<evidence type="ECO:0000269" key="7">
    <source>
    </source>
</evidence>
<evidence type="ECO:0000303" key="8">
    <source>
    </source>
</evidence>
<evidence type="ECO:0000305" key="9"/>
<name>PPMNT_MYCBP</name>
<protein>
    <recommendedName>
        <fullName>Bifunctional apolipoprotein N-acyltransferase/polyprenol monophosphomannose synthase</fullName>
    </recommendedName>
    <domain>
        <recommendedName>
            <fullName evidence="8">Apolipoprotein N-acyltransferase</fullName>
            <shortName evidence="3">ALP N-acyltransferase</shortName>
            <ecNumber evidence="7">2.3.1.269</ecNumber>
        </recommendedName>
    </domain>
    <domain>
        <recommendedName>
            <fullName>Polyprenol monophosphomannose synthase</fullName>
            <shortName>PPM synthase</shortName>
            <shortName>Polyprenol-P-Man synthase</shortName>
            <shortName>Ppm1</shortName>
            <ecNumber evidence="2">2.4.1.-</ecNumber>
        </recommendedName>
        <alternativeName>
            <fullName>Dolichol-phosphate mannose synthase</fullName>
            <ecNumber evidence="2">2.4.1.83</ecNumber>
        </alternativeName>
    </domain>
</protein>
<accession>A0A0H3M5A8</accession>
<keyword id="KW-0012">Acyltransferase</keyword>
<keyword id="KW-1003">Cell membrane</keyword>
<keyword id="KW-0378">Hydrolase</keyword>
<keyword id="KW-0472">Membrane</keyword>
<keyword id="KW-0808">Transferase</keyword>
<keyword id="KW-0812">Transmembrane</keyword>
<keyword id="KW-1133">Transmembrane helix</keyword>
<feature type="chain" id="PRO_0000434583" description="Bifunctional apolipoprotein N-acyltransferase/polyprenol monophosphomannose synthase">
    <location>
        <begin position="1"/>
        <end position="874"/>
    </location>
</feature>
<feature type="transmembrane region" description="Helical" evidence="1">
    <location>
        <begin position="23"/>
        <end position="42"/>
    </location>
</feature>
<feature type="transmembrane region" description="Helical" evidence="1">
    <location>
        <begin position="72"/>
        <end position="89"/>
    </location>
</feature>
<feature type="transmembrane region" description="Helical" evidence="1">
    <location>
        <begin position="94"/>
        <end position="115"/>
    </location>
</feature>
<feature type="transmembrane region" description="Helical" evidence="1">
    <location>
        <begin position="177"/>
        <end position="194"/>
    </location>
</feature>
<feature type="transmembrane region" description="Helical" evidence="1">
    <location>
        <begin position="206"/>
        <end position="223"/>
    </location>
</feature>
<feature type="transmembrane region" description="Helical" evidence="1">
    <location>
        <begin position="509"/>
        <end position="526"/>
    </location>
</feature>
<feature type="domain" description="CN hydrolase" evidence="5">
    <location>
        <begin position="241"/>
        <end position="497"/>
    </location>
</feature>
<feature type="region of interest" description="Apolipoprotein N-acyltransferase">
    <location>
        <begin position="1"/>
        <end position="593"/>
    </location>
</feature>
<feature type="region of interest" description="Disordered" evidence="6">
    <location>
        <begin position="533"/>
        <end position="609"/>
    </location>
</feature>
<feature type="region of interest" description="Polyprenol monophosphomannose synthase">
    <location>
        <begin position="594"/>
        <end position="874"/>
    </location>
</feature>
<feature type="region of interest" description="Disordered" evidence="6">
    <location>
        <begin position="852"/>
        <end position="874"/>
    </location>
</feature>
<feature type="active site" description="Proton acceptor" evidence="5">
    <location>
        <position position="294"/>
    </location>
</feature>
<feature type="active site" evidence="5">
    <location>
        <position position="359"/>
    </location>
</feature>
<feature type="active site" description="Nucleophile" evidence="5">
    <location>
        <position position="409"/>
    </location>
</feature>
<proteinExistence type="evidence at protein level"/>
<organism>
    <name type="scientific">Mycobacterium bovis (strain BCG / Pasteur 1173P2)</name>
    <dbReference type="NCBI Taxonomy" id="410289"/>
    <lineage>
        <taxon>Bacteria</taxon>
        <taxon>Bacillati</taxon>
        <taxon>Actinomycetota</taxon>
        <taxon>Actinomycetes</taxon>
        <taxon>Mycobacteriales</taxon>
        <taxon>Mycobacteriaceae</taxon>
        <taxon>Mycobacterium</taxon>
        <taxon>Mycobacterium tuberculosis complex</taxon>
    </lineage>
</organism>
<comment type="function">
    <text evidence="7">Catalyzes the phospholipid dependent N-acylation of the N-terminal cysteine of apolipoprotein, the last step in lipoprotein maturation.</text>
</comment>
<comment type="function">
    <text evidence="2">Transfers mannose from GDP-mannose to lipid acceptors to form polyprenol monophosphomannose (PPM). PMM is an alkai-stable sugar donor which adds mannose-phosphate residues to triacylated-phosphatidyl-myo-inositol mannosides (PIM2), eventually leading to generation of the cell wall glycolipid lipoglycan modulins lipoarabinomannan (LAM) and lipomannan (LM).</text>
</comment>
<comment type="catalytic activity">
    <reaction evidence="7">
        <text>N-terminal S-1,2-diacyl-sn-glyceryl-L-cysteinyl-[lipoprotein] + a glycerophospholipid = N-acyl-S-1,2-diacyl-sn-glyceryl-L-cysteinyl-[lipoprotein] + a 2-acyl-sn-glycero-3-phospholipid + H(+)</text>
        <dbReference type="Rhea" id="RHEA:48228"/>
        <dbReference type="Rhea" id="RHEA-COMP:14681"/>
        <dbReference type="Rhea" id="RHEA-COMP:14684"/>
        <dbReference type="ChEBI" id="CHEBI:15378"/>
        <dbReference type="ChEBI" id="CHEBI:136912"/>
        <dbReference type="ChEBI" id="CHEBI:140656"/>
        <dbReference type="ChEBI" id="CHEBI:140657"/>
        <dbReference type="ChEBI" id="CHEBI:140660"/>
        <dbReference type="EC" id="2.3.1.269"/>
    </reaction>
</comment>
<comment type="catalytic activity">
    <reaction evidence="2">
        <text>a di-trans,poly-cis-dolichyl phosphate + GDP-alpha-D-mannose = a di-trans,poly-cis-dolichyl beta-D-mannosyl phosphate + GDP</text>
        <dbReference type="Rhea" id="RHEA:21184"/>
        <dbReference type="Rhea" id="RHEA-COMP:19498"/>
        <dbReference type="Rhea" id="RHEA-COMP:19501"/>
        <dbReference type="ChEBI" id="CHEBI:57527"/>
        <dbReference type="ChEBI" id="CHEBI:57683"/>
        <dbReference type="ChEBI" id="CHEBI:58189"/>
        <dbReference type="ChEBI" id="CHEBI:58211"/>
        <dbReference type="EC" id="2.4.1.83"/>
    </reaction>
</comment>
<comment type="pathway">
    <text>Protein modification; lipoprotein biosynthesis (N-acyl transfer).</text>
</comment>
<comment type="subcellular location">
    <subcellularLocation>
        <location evidence="4">Cell membrane</location>
        <topology evidence="4">Multi-pass membrane protein</topology>
    </subcellularLocation>
</comment>
<comment type="domain">
    <text evidence="2">Consists of 2 domains; the N-terminus (residues 1-593) has the N-acyltransferase activity while the C-terminus (residues 594-874) has polyprenol monophosphomannose (PPM) synthase activity.</text>
</comment>
<comment type="disruption phenotype">
    <text evidence="7">Loss of N-acylation of apolipoproteins.</text>
</comment>
<comment type="miscellaneous">
    <text evidence="9">In a number of other Mycobacteria, including M.avis, M.leprae and M.smegmatis, these domains are encoded by 2 separate adjacent genes.</text>
</comment>
<comment type="similarity">
    <text>In the N-terminal section; belongs to the CN hydrolase family. Apolipoprotein N-acyltransferase subfamily.</text>
</comment>
<comment type="similarity">
    <text evidence="9">In the C-terminal section; belongs to the glycosyltransferase 2 family.</text>
</comment>
<dbReference type="EC" id="2.3.1.269" evidence="7"/>
<dbReference type="EC" id="2.4.1.-" evidence="2"/>
<dbReference type="EC" id="2.4.1.83" evidence="2"/>
<dbReference type="EMBL" id="AM408590">
    <property type="protein sequence ID" value="CAL72058.1"/>
    <property type="molecule type" value="Genomic_DNA"/>
</dbReference>
<dbReference type="RefSeq" id="WP_003902238.1">
    <property type="nucleotide sequence ID" value="NC_008769.1"/>
</dbReference>
<dbReference type="SMR" id="A0A0H3M5A8"/>
<dbReference type="KEGG" id="mbb:BCG_2070c"/>
<dbReference type="HOGENOM" id="CLU_014143_0_0_11"/>
<dbReference type="BRENDA" id="2.3.1.269">
    <property type="organism ID" value="3494"/>
</dbReference>
<dbReference type="UniPathway" id="UPA00666"/>
<dbReference type="Proteomes" id="UP000001472">
    <property type="component" value="Chromosome"/>
</dbReference>
<dbReference type="GO" id="GO:0005886">
    <property type="term" value="C:plasma membrane"/>
    <property type="evidence" value="ECO:0007669"/>
    <property type="project" value="UniProtKB-SubCell"/>
</dbReference>
<dbReference type="GO" id="GO:0004582">
    <property type="term" value="F:dolichyl-phosphate beta-D-mannosyltransferase activity"/>
    <property type="evidence" value="ECO:0007669"/>
    <property type="project" value="UniProtKB-EC"/>
</dbReference>
<dbReference type="GO" id="GO:0016787">
    <property type="term" value="F:hydrolase activity"/>
    <property type="evidence" value="ECO:0007669"/>
    <property type="project" value="UniProtKB-KW"/>
</dbReference>
<dbReference type="GO" id="GO:0016410">
    <property type="term" value="F:N-acyltransferase activity"/>
    <property type="evidence" value="ECO:0007669"/>
    <property type="project" value="UniProtKB-UniRule"/>
</dbReference>
<dbReference type="GO" id="GO:0042158">
    <property type="term" value="P:lipoprotein biosynthetic process"/>
    <property type="evidence" value="ECO:0007669"/>
    <property type="project" value="UniProtKB-UniRule"/>
</dbReference>
<dbReference type="CDD" id="cd07571">
    <property type="entry name" value="ALP_N-acyl_transferase"/>
    <property type="match status" value="1"/>
</dbReference>
<dbReference type="CDD" id="cd06442">
    <property type="entry name" value="DPM1_like"/>
    <property type="match status" value="1"/>
</dbReference>
<dbReference type="FunFam" id="3.90.550.10:FF:000122">
    <property type="entry name" value="Dolichol-phosphate mannosyltransferase subunit 1"/>
    <property type="match status" value="1"/>
</dbReference>
<dbReference type="Gene3D" id="3.60.110.10">
    <property type="entry name" value="Carbon-nitrogen hydrolase"/>
    <property type="match status" value="1"/>
</dbReference>
<dbReference type="Gene3D" id="3.90.550.10">
    <property type="entry name" value="Spore Coat Polysaccharide Biosynthesis Protein SpsA, Chain A"/>
    <property type="match status" value="1"/>
</dbReference>
<dbReference type="HAMAP" id="MF_01148">
    <property type="entry name" value="Lnt"/>
    <property type="match status" value="1"/>
</dbReference>
<dbReference type="InterPro" id="IPR004563">
    <property type="entry name" value="Apolipo_AcylTrfase"/>
</dbReference>
<dbReference type="InterPro" id="IPR003010">
    <property type="entry name" value="C-N_Hydrolase"/>
</dbReference>
<dbReference type="InterPro" id="IPR036526">
    <property type="entry name" value="C-N_Hydrolase_sf"/>
</dbReference>
<dbReference type="InterPro" id="IPR039528">
    <property type="entry name" value="DPM1-like"/>
</dbReference>
<dbReference type="InterPro" id="IPR001173">
    <property type="entry name" value="Glyco_trans_2-like"/>
</dbReference>
<dbReference type="InterPro" id="IPR045378">
    <property type="entry name" value="LNT_N"/>
</dbReference>
<dbReference type="InterPro" id="IPR029044">
    <property type="entry name" value="Nucleotide-diphossugar_trans"/>
</dbReference>
<dbReference type="NCBIfam" id="TIGR00546">
    <property type="entry name" value="lnt"/>
    <property type="match status" value="1"/>
</dbReference>
<dbReference type="PANTHER" id="PTHR38686">
    <property type="entry name" value="APOLIPOPROTEIN N-ACYLTRANSFERASE"/>
    <property type="match status" value="1"/>
</dbReference>
<dbReference type="PANTHER" id="PTHR38686:SF1">
    <property type="entry name" value="APOLIPOPROTEIN N-ACYLTRANSFERASE"/>
    <property type="match status" value="1"/>
</dbReference>
<dbReference type="Pfam" id="PF00795">
    <property type="entry name" value="CN_hydrolase"/>
    <property type="match status" value="1"/>
</dbReference>
<dbReference type="Pfam" id="PF00535">
    <property type="entry name" value="Glycos_transf_2"/>
    <property type="match status" value="1"/>
</dbReference>
<dbReference type="Pfam" id="PF20154">
    <property type="entry name" value="LNT_N"/>
    <property type="match status" value="1"/>
</dbReference>
<dbReference type="SUPFAM" id="SSF56317">
    <property type="entry name" value="Carbon-nitrogen hydrolase"/>
    <property type="match status" value="1"/>
</dbReference>
<dbReference type="SUPFAM" id="SSF53448">
    <property type="entry name" value="Nucleotide-diphospho-sugar transferases"/>
    <property type="match status" value="1"/>
</dbReference>
<dbReference type="PROSITE" id="PS50263">
    <property type="entry name" value="CN_HYDROLASE"/>
    <property type="match status" value="1"/>
</dbReference>
<gene>
    <name evidence="8" type="primary">lnt</name>
    <name evidence="9" type="synonym">ppm1</name>
    <name type="ordered locus">BCG_2070c</name>
</gene>